<feature type="chain" id="PRO_0000445505" description="FCS-Like Zinc finger 15">
    <location>
        <begin position="1"/>
        <end position="150"/>
    </location>
</feature>
<feature type="zinc finger region" description="FLZ-type" evidence="1">
    <location>
        <begin position="67"/>
        <end position="111"/>
    </location>
</feature>
<feature type="region of interest" description="Disordered" evidence="2">
    <location>
        <begin position="12"/>
        <end position="31"/>
    </location>
</feature>
<feature type="region of interest" description="Disordered" evidence="2">
    <location>
        <begin position="129"/>
        <end position="150"/>
    </location>
</feature>
<feature type="compositionally biased region" description="Low complexity" evidence="2">
    <location>
        <begin position="12"/>
        <end position="28"/>
    </location>
</feature>
<dbReference type="EMBL" id="AB023028">
    <property type="protein sequence ID" value="BAB10094.1"/>
    <property type="molecule type" value="Genomic_DNA"/>
</dbReference>
<dbReference type="EMBL" id="CP002688">
    <property type="protein sequence ID" value="AED95773.1"/>
    <property type="molecule type" value="Genomic_DNA"/>
</dbReference>
<dbReference type="RefSeq" id="NP_199723.1">
    <property type="nucleotide sequence ID" value="NM_124289.4"/>
</dbReference>
<dbReference type="FunCoup" id="Q9FH22">
    <property type="interactions" value="15"/>
</dbReference>
<dbReference type="IntAct" id="Q9FH22">
    <property type="interactions" value="1"/>
</dbReference>
<dbReference type="STRING" id="3702.Q9FH22"/>
<dbReference type="PaxDb" id="3702-AT5G49120.1"/>
<dbReference type="ProteomicsDB" id="230629"/>
<dbReference type="EnsemblPlants" id="AT5G49120.1">
    <property type="protein sequence ID" value="AT5G49120.1"/>
    <property type="gene ID" value="AT5G49120"/>
</dbReference>
<dbReference type="GeneID" id="834971"/>
<dbReference type="Gramene" id="AT5G49120.1">
    <property type="protein sequence ID" value="AT5G49120.1"/>
    <property type="gene ID" value="AT5G49120"/>
</dbReference>
<dbReference type="KEGG" id="ath:AT5G49120"/>
<dbReference type="Araport" id="AT5G49120"/>
<dbReference type="TAIR" id="AT5G49120"/>
<dbReference type="eggNOG" id="ENOG502S3GA">
    <property type="taxonomic scope" value="Eukaryota"/>
</dbReference>
<dbReference type="HOGENOM" id="CLU_143767_0_0_1"/>
<dbReference type="InParanoid" id="Q9FH22"/>
<dbReference type="OMA" id="EPHSKSH"/>
<dbReference type="PhylomeDB" id="Q9FH22"/>
<dbReference type="PRO" id="PR:Q9FH22"/>
<dbReference type="Proteomes" id="UP000006548">
    <property type="component" value="Chromosome 5"/>
</dbReference>
<dbReference type="ExpressionAtlas" id="Q9FH22">
    <property type="expression patterns" value="baseline and differential"/>
</dbReference>
<dbReference type="GO" id="GO:0000932">
    <property type="term" value="C:P-body"/>
    <property type="evidence" value="ECO:0000314"/>
    <property type="project" value="UniProtKB"/>
</dbReference>
<dbReference type="GO" id="GO:0008270">
    <property type="term" value="F:zinc ion binding"/>
    <property type="evidence" value="ECO:0007669"/>
    <property type="project" value="UniProtKB-KW"/>
</dbReference>
<dbReference type="InterPro" id="IPR007650">
    <property type="entry name" value="Zf-FLZ_dom"/>
</dbReference>
<dbReference type="PANTHER" id="PTHR33059:SF84">
    <property type="entry name" value="FCS-LIKE ZINC FINGER 15"/>
    <property type="match status" value="1"/>
</dbReference>
<dbReference type="PANTHER" id="PTHR33059">
    <property type="entry name" value="FCS-LIKE ZINC FINGER 5"/>
    <property type="match status" value="1"/>
</dbReference>
<dbReference type="Pfam" id="PF04570">
    <property type="entry name" value="zf-FLZ"/>
    <property type="match status" value="1"/>
</dbReference>
<dbReference type="PROSITE" id="PS51795">
    <property type="entry name" value="ZF_FLZ"/>
    <property type="match status" value="1"/>
</dbReference>
<proteinExistence type="evidence at protein level"/>
<comment type="function">
    <text evidence="3">May act as an adapter to facilitate the interaction of SnRK1 complex with effector proteins, conferring tissue- and stimulus-type specific differences in the SnRK1 regulation pathway.</text>
</comment>
<comment type="subunit">
    <text evidence="4">Interacts with KIN10 and KIN11 via its FLZ-type zinc finger domain (PubMed:29945970). Interacts with KINB1 and KINB3 via its N-terminal part (PubMed:29945970). Forms homodimer and heterodimer with FLZ1, FLZ2 and FLZ7 in vitro (PubMed:29945970).</text>
</comment>
<comment type="subcellular location">
    <subcellularLocation>
        <location evidence="4">Cytoplasm</location>
        <location evidence="4">P-body</location>
    </subcellularLocation>
</comment>
<comment type="similarity">
    <text evidence="7">Belongs to the FLZ family.</text>
</comment>
<keyword id="KW-0963">Cytoplasm</keyword>
<keyword id="KW-0479">Metal-binding</keyword>
<keyword id="KW-1185">Reference proteome</keyword>
<keyword id="KW-0862">Zinc</keyword>
<keyword id="KW-0863">Zinc-finger</keyword>
<accession>Q9FH22</accession>
<reference key="1">
    <citation type="journal article" date="2000" name="DNA Res.">
        <title>Structural analysis of Arabidopsis thaliana chromosome 5. X. Sequence features of the regions of 3,076,755 bp covered by sixty P1 and TAC clones.</title>
        <authorList>
            <person name="Sato S."/>
            <person name="Nakamura Y."/>
            <person name="Kaneko T."/>
            <person name="Katoh T."/>
            <person name="Asamizu E."/>
            <person name="Kotani H."/>
            <person name="Tabata S."/>
        </authorList>
    </citation>
    <scope>NUCLEOTIDE SEQUENCE [LARGE SCALE GENOMIC DNA]</scope>
    <source>
        <strain>cv. Columbia</strain>
    </source>
</reference>
<reference key="2">
    <citation type="journal article" date="2017" name="Plant J.">
        <title>Araport11: a complete reannotation of the Arabidopsis thaliana reference genome.</title>
        <authorList>
            <person name="Cheng C.Y."/>
            <person name="Krishnakumar V."/>
            <person name="Chan A.P."/>
            <person name="Thibaud-Nissen F."/>
            <person name="Schobel S."/>
            <person name="Town C.D."/>
        </authorList>
    </citation>
    <scope>GENOME REANNOTATION</scope>
    <source>
        <strain>cv. Columbia</strain>
    </source>
</reference>
<reference key="3">
    <citation type="journal article" date="2014" name="Front. Plant Sci.">
        <title>The complex becomes more complex: protein-protein interactions of SnRK1 with DUF581 family proteins provide a framework for cell- and stimulus type-specific SnRK1 signaling in plants.</title>
        <authorList>
            <person name="Nietzsche M."/>
            <person name="Schiessl I."/>
            <person name="Boernke F."/>
        </authorList>
    </citation>
    <scope>GENE FAMILY</scope>
    <scope>FUNCTION</scope>
</reference>
<reference key="4">
    <citation type="journal article" date="2014" name="Front. Plant Sci.">
        <title>Corrigendum: The complex becomes more complex: protein-protein interactions of SnRK1 with DUF581 family proteins provide a framework for cell- and stimulus type-specific SnRK1 signaling in plants.</title>
        <authorList>
            <person name="Boernke F."/>
        </authorList>
    </citation>
    <scope>ERRATUM OF PUBMED:24600465</scope>
</reference>
<reference key="5">
    <citation type="journal article" date="2014" name="PLoS ONE">
        <title>DUF581 is plant specific FCS-like zinc finger involved in protein-protein interaction.</title>
        <authorList>
            <person name="Jamsheer K M."/>
            <person name="Laxmi A."/>
        </authorList>
    </citation>
    <scope>GENE FAMILY</scope>
    <scope>NOMENCLATURE</scope>
</reference>
<reference key="6">
    <citation type="journal article" date="2018" name="J. Biol. Chem.">
        <title>The FCS-like zinc finger scaffold of the kinase SnRK1 is formed by the coordinated actions of the FLZ domain and intrinsically disordered regions.</title>
        <authorList>
            <person name="Jamsheer K M."/>
            <person name="Shukla B.N."/>
            <person name="Jindal S."/>
            <person name="Gopan N."/>
            <person name="Mannully C.T."/>
            <person name="Laxmi A."/>
        </authorList>
    </citation>
    <scope>INTERACTION WITH KIN10; KIN11; KINB1 AND KINB3</scope>
    <scope>SUBUNIT</scope>
    <scope>SUBCELLULAR LOCATION</scope>
</reference>
<gene>
    <name evidence="6" type="primary">FLZ15</name>
    <name evidence="5" type="synonym">DUF581-17</name>
    <name evidence="8" type="ordered locus">At5g49120</name>
    <name evidence="9" type="ORF">K20J1.9</name>
</gene>
<organism>
    <name type="scientific">Arabidopsis thaliana</name>
    <name type="common">Mouse-ear cress</name>
    <dbReference type="NCBI Taxonomy" id="3702"/>
    <lineage>
        <taxon>Eukaryota</taxon>
        <taxon>Viridiplantae</taxon>
        <taxon>Streptophyta</taxon>
        <taxon>Embryophyta</taxon>
        <taxon>Tracheophyta</taxon>
        <taxon>Spermatophyta</taxon>
        <taxon>Magnoliopsida</taxon>
        <taxon>eudicotyledons</taxon>
        <taxon>Gunneridae</taxon>
        <taxon>Pentapetalae</taxon>
        <taxon>rosids</taxon>
        <taxon>malvids</taxon>
        <taxon>Brassicales</taxon>
        <taxon>Brassicaceae</taxon>
        <taxon>Camelineae</taxon>
        <taxon>Arabidopsis</taxon>
    </lineage>
</organism>
<sequence>MVGLSIVLEMTNNNNNNNNNNNNNNNKNPLSEGVLISPKVVNKANIIVTTAVTTDTTNLRRCYQDSGFLEHCFLCRRKLLPAKDIYMYKGDRAFCSVECRSKQMIMDEEESLRREYCSLMDVKKKKFDSPATAPSRYRRDPRNQAGGFAY</sequence>
<name>FLZ15_ARATH</name>
<protein>
    <recommendedName>
        <fullName evidence="6">FCS-Like Zinc finger 15</fullName>
    </recommendedName>
</protein>
<evidence type="ECO:0000255" key="1">
    <source>
        <dbReference type="PROSITE-ProRule" id="PRU01131"/>
    </source>
</evidence>
<evidence type="ECO:0000256" key="2">
    <source>
        <dbReference type="SAM" id="MobiDB-lite"/>
    </source>
</evidence>
<evidence type="ECO:0000269" key="3">
    <source>
    </source>
</evidence>
<evidence type="ECO:0000269" key="4">
    <source>
    </source>
</evidence>
<evidence type="ECO:0000303" key="5">
    <source>
    </source>
</evidence>
<evidence type="ECO:0000303" key="6">
    <source>
    </source>
</evidence>
<evidence type="ECO:0000305" key="7"/>
<evidence type="ECO:0000312" key="8">
    <source>
        <dbReference type="Araport" id="AT5G49120"/>
    </source>
</evidence>
<evidence type="ECO:0000312" key="9">
    <source>
        <dbReference type="EMBL" id="BAB10094.1"/>
    </source>
</evidence>